<evidence type="ECO:0000255" key="1">
    <source>
        <dbReference type="HAMAP-Rule" id="MF_01440"/>
    </source>
</evidence>
<organism>
    <name type="scientific">Pseudomonas savastanoi pv. phaseolicola (strain 1448A / Race 6)</name>
    <name type="common">Pseudomonas syringae pv. phaseolicola (strain 1448A / Race 6)</name>
    <dbReference type="NCBI Taxonomy" id="264730"/>
    <lineage>
        <taxon>Bacteria</taxon>
        <taxon>Pseudomonadati</taxon>
        <taxon>Pseudomonadota</taxon>
        <taxon>Gammaproteobacteria</taxon>
        <taxon>Pseudomonadales</taxon>
        <taxon>Pseudomonadaceae</taxon>
        <taxon>Pseudomonas</taxon>
    </lineage>
</organism>
<proteinExistence type="inferred from homology"/>
<reference key="1">
    <citation type="journal article" date="2005" name="J. Bacteriol.">
        <title>Whole-genome sequence analysis of Pseudomonas syringae pv. phaseolicola 1448A reveals divergence among pathovars in genes involved in virulence and transposition.</title>
        <authorList>
            <person name="Joardar V."/>
            <person name="Lindeberg M."/>
            <person name="Jackson R.W."/>
            <person name="Selengut J."/>
            <person name="Dodson R."/>
            <person name="Brinkac L.M."/>
            <person name="Daugherty S.C."/>
            <person name="DeBoy R.T."/>
            <person name="Durkin A.S."/>
            <person name="Gwinn Giglio M."/>
            <person name="Madupu R."/>
            <person name="Nelson W.C."/>
            <person name="Rosovitz M.J."/>
            <person name="Sullivan S.A."/>
            <person name="Crabtree J."/>
            <person name="Creasy T."/>
            <person name="Davidsen T.M."/>
            <person name="Haft D.H."/>
            <person name="Zafar N."/>
            <person name="Zhou L."/>
            <person name="Halpin R."/>
            <person name="Holley T."/>
            <person name="Khouri H.M."/>
            <person name="Feldblyum T.V."/>
            <person name="White O."/>
            <person name="Fraser C.M."/>
            <person name="Chatterjee A.K."/>
            <person name="Cartinhour S."/>
            <person name="Schneider D."/>
            <person name="Mansfield J.W."/>
            <person name="Collmer A."/>
            <person name="Buell R."/>
        </authorList>
    </citation>
    <scope>NUCLEOTIDE SEQUENCE [LARGE SCALE GENOMIC DNA]</scope>
    <source>
        <strain>1448A / Race 6</strain>
    </source>
</reference>
<comment type="function">
    <text evidence="1">Probably deamidates glutamine residues to glutamate on methyl-accepting chemotaxis receptors (MCPs), playing an important role in chemotaxis.</text>
</comment>
<comment type="catalytic activity">
    <reaction evidence="1">
        <text>L-glutaminyl-[protein] + H2O = L-glutamyl-[protein] + NH4(+)</text>
        <dbReference type="Rhea" id="RHEA:16441"/>
        <dbReference type="Rhea" id="RHEA-COMP:10207"/>
        <dbReference type="Rhea" id="RHEA-COMP:10208"/>
        <dbReference type="ChEBI" id="CHEBI:15377"/>
        <dbReference type="ChEBI" id="CHEBI:28938"/>
        <dbReference type="ChEBI" id="CHEBI:29973"/>
        <dbReference type="ChEBI" id="CHEBI:30011"/>
        <dbReference type="EC" id="3.5.1.44"/>
    </reaction>
</comment>
<comment type="similarity">
    <text evidence="1">Belongs to the CheD family.</text>
</comment>
<feature type="chain" id="PRO_0000251050" description="Probable chemoreceptor glutamine deamidase CheD">
    <location>
        <begin position="1"/>
        <end position="177"/>
    </location>
</feature>
<name>CHED_PSE14</name>
<gene>
    <name evidence="1" type="primary">cheD</name>
    <name type="ordered locus">PSPPH_0801</name>
</gene>
<dbReference type="EC" id="3.5.1.44" evidence="1"/>
<dbReference type="EMBL" id="CP000058">
    <property type="protein sequence ID" value="AAZ37205.1"/>
    <property type="molecule type" value="Genomic_DNA"/>
</dbReference>
<dbReference type="RefSeq" id="WP_011167713.1">
    <property type="nucleotide sequence ID" value="NC_005773.3"/>
</dbReference>
<dbReference type="SMR" id="Q48ND8"/>
<dbReference type="KEGG" id="psp:PSPPH_0801"/>
<dbReference type="eggNOG" id="COG1871">
    <property type="taxonomic scope" value="Bacteria"/>
</dbReference>
<dbReference type="HOGENOM" id="CLU_087854_1_1_6"/>
<dbReference type="Proteomes" id="UP000000551">
    <property type="component" value="Chromosome"/>
</dbReference>
<dbReference type="GO" id="GO:0050568">
    <property type="term" value="F:protein-glutamine glutaminase activity"/>
    <property type="evidence" value="ECO:0007669"/>
    <property type="project" value="UniProtKB-UniRule"/>
</dbReference>
<dbReference type="GO" id="GO:0006935">
    <property type="term" value="P:chemotaxis"/>
    <property type="evidence" value="ECO:0007669"/>
    <property type="project" value="UniProtKB-UniRule"/>
</dbReference>
<dbReference type="CDD" id="cd16352">
    <property type="entry name" value="CheD"/>
    <property type="match status" value="1"/>
</dbReference>
<dbReference type="Gene3D" id="3.30.1330.200">
    <property type="match status" value="1"/>
</dbReference>
<dbReference type="HAMAP" id="MF_01440">
    <property type="entry name" value="CheD"/>
    <property type="match status" value="1"/>
</dbReference>
<dbReference type="InterPro" id="IPR038592">
    <property type="entry name" value="CheD-like_sf"/>
</dbReference>
<dbReference type="InterPro" id="IPR005659">
    <property type="entry name" value="Chemorcpt_Glu_NH3ase_CheD"/>
</dbReference>
<dbReference type="InterPro" id="IPR011324">
    <property type="entry name" value="Cytotoxic_necrot_fac-like_cat"/>
</dbReference>
<dbReference type="NCBIfam" id="NF010020">
    <property type="entry name" value="PRK13498.1"/>
    <property type="match status" value="1"/>
</dbReference>
<dbReference type="PANTHER" id="PTHR35147:SF3">
    <property type="entry name" value="CHEMORECEPTOR GLUTAMINE DEAMIDASE CHED 1-RELATED"/>
    <property type="match status" value="1"/>
</dbReference>
<dbReference type="PANTHER" id="PTHR35147">
    <property type="entry name" value="CHEMORECEPTOR GLUTAMINE DEAMIDASE CHED-RELATED"/>
    <property type="match status" value="1"/>
</dbReference>
<dbReference type="Pfam" id="PF03975">
    <property type="entry name" value="CheD"/>
    <property type="match status" value="1"/>
</dbReference>
<dbReference type="SUPFAM" id="SSF64438">
    <property type="entry name" value="CNF1/YfiH-like putative cysteine hydrolases"/>
    <property type="match status" value="1"/>
</dbReference>
<sequence>MNTPVGVAEIVLGPGEVVFQTRPTRLRTLLGSCVAITFWHPWRRIGGMCHFMLPGRIRRHQPLDGRYADEAMEILIRHALANGTLPEEYQVKLFGGGEMFPAHRHDPHMQNVADSNVHAALALAEQHRLKLMAQDLGSTGHRNIIFDLWNGNVWVRHQPMEAIEKDAKQKNQRIAGR</sequence>
<protein>
    <recommendedName>
        <fullName evidence="1">Probable chemoreceptor glutamine deamidase CheD</fullName>
        <ecNumber evidence="1">3.5.1.44</ecNumber>
    </recommendedName>
</protein>
<keyword id="KW-0145">Chemotaxis</keyword>
<keyword id="KW-0378">Hydrolase</keyword>
<accession>Q48ND8</accession>